<name>TDCC_CITK8</name>
<feature type="chain" id="PRO_1000069288" description="Threonine/serine transporter TdcC">
    <location>
        <begin position="1"/>
        <end position="443"/>
    </location>
</feature>
<feature type="transmembrane region" description="Helical" evidence="1">
    <location>
        <begin position="22"/>
        <end position="42"/>
    </location>
</feature>
<feature type="transmembrane region" description="Helical" evidence="1">
    <location>
        <begin position="44"/>
        <end position="64"/>
    </location>
</feature>
<feature type="transmembrane region" description="Helical" evidence="1">
    <location>
        <begin position="97"/>
        <end position="117"/>
    </location>
</feature>
<feature type="transmembrane region" description="Helical" evidence="1">
    <location>
        <begin position="140"/>
        <end position="160"/>
    </location>
</feature>
<feature type="transmembrane region" description="Helical" evidence="1">
    <location>
        <begin position="163"/>
        <end position="183"/>
    </location>
</feature>
<feature type="transmembrane region" description="Helical" evidence="1">
    <location>
        <begin position="207"/>
        <end position="227"/>
    </location>
</feature>
<feature type="transmembrane region" description="Helical" evidence="1">
    <location>
        <begin position="261"/>
        <end position="281"/>
    </location>
</feature>
<feature type="transmembrane region" description="Helical" evidence="1">
    <location>
        <begin position="319"/>
        <end position="339"/>
    </location>
</feature>
<feature type="transmembrane region" description="Helical" evidence="1">
    <location>
        <begin position="366"/>
        <end position="386"/>
    </location>
</feature>
<feature type="transmembrane region" description="Helical" evidence="1">
    <location>
        <begin position="389"/>
        <end position="409"/>
    </location>
</feature>
<feature type="transmembrane region" description="Helical" evidence="1">
    <location>
        <begin position="423"/>
        <end position="443"/>
    </location>
</feature>
<keyword id="KW-0029">Amino-acid transport</keyword>
<keyword id="KW-0997">Cell inner membrane</keyword>
<keyword id="KW-1003">Cell membrane</keyword>
<keyword id="KW-0472">Membrane</keyword>
<keyword id="KW-1185">Reference proteome</keyword>
<keyword id="KW-0769">Symport</keyword>
<keyword id="KW-0812">Transmembrane</keyword>
<keyword id="KW-1133">Transmembrane helix</keyword>
<keyword id="KW-0813">Transport</keyword>
<sequence length="443" mass="48901">MSTTDSIVSSQTKQSSWRKSDTTWTLGLFGTAIGAGVLFFPIRAGFGGLIPILLMLVLAYPIAFYCHRALARLCLSGSNPSGNITETVEEHFGKTGGVVITFLYFFAICPLLWIYGVTITNTFMTFWENQLQMPALNRGFVALFLLLLMAFVIWFGKDLMVKVMSYLVWPFIASLVLISLSLIPYWNSAVIDQVDLSNIALTGHDGILVTVWLGISIMVFSFNFSPIVSSFVVSKREEYEKDFGREFTERKCSQIISRASMLMVAVVMFFAFSCLFTLSPANMADAKAQNIPVLSYLANHFASLSGTKSTFATVLEYGASIIALVAIFKSFFGHYLGTLEGLNGLVLKFGYKGDKTKVSLGKLNTISMIFIMGSTWVVAYANPNILDLIEAMGAPIIASLLCLLPMYAIRKAPSLAKYRGRLDNVFVTVIGLLTILNIVYKLF</sequence>
<comment type="function">
    <text evidence="1">Involved in the import of threonine and serine into the cell, with the concomitant import of a proton (symport system).</text>
</comment>
<comment type="catalytic activity">
    <reaction evidence="1">
        <text>L-threonine(in) + H(+)(in) = L-threonine(out) + H(+)(out)</text>
        <dbReference type="Rhea" id="RHEA:28883"/>
        <dbReference type="ChEBI" id="CHEBI:15378"/>
        <dbReference type="ChEBI" id="CHEBI:57926"/>
    </reaction>
    <physiologicalReaction direction="right-to-left" evidence="1">
        <dbReference type="Rhea" id="RHEA:28885"/>
    </physiologicalReaction>
</comment>
<comment type="catalytic activity">
    <reaction evidence="1">
        <text>L-serine(in) + H(+)(in) = L-serine(out) + H(+)(out)</text>
        <dbReference type="Rhea" id="RHEA:28887"/>
        <dbReference type="ChEBI" id="CHEBI:15378"/>
        <dbReference type="ChEBI" id="CHEBI:33384"/>
    </reaction>
    <physiologicalReaction direction="right-to-left" evidence="1">
        <dbReference type="Rhea" id="RHEA:28889"/>
    </physiologicalReaction>
</comment>
<comment type="subcellular location">
    <subcellularLocation>
        <location evidence="1">Cell inner membrane</location>
        <topology evidence="1">Multi-pass membrane protein</topology>
    </subcellularLocation>
</comment>
<comment type="similarity">
    <text evidence="1">Belongs to the amino acid/polyamine transporter 2 family. SdaC/TdcC subfamily.</text>
</comment>
<reference key="1">
    <citation type="submission" date="2007-08" db="EMBL/GenBank/DDBJ databases">
        <authorList>
            <consortium name="The Citrobacter koseri Genome Sequencing Project"/>
            <person name="McClelland M."/>
            <person name="Sanderson E.K."/>
            <person name="Porwollik S."/>
            <person name="Spieth J."/>
            <person name="Clifton W.S."/>
            <person name="Latreille P."/>
            <person name="Courtney L."/>
            <person name="Wang C."/>
            <person name="Pepin K."/>
            <person name="Bhonagiri V."/>
            <person name="Nash W."/>
            <person name="Johnson M."/>
            <person name="Thiruvilangam P."/>
            <person name="Wilson R."/>
        </authorList>
    </citation>
    <scope>NUCLEOTIDE SEQUENCE [LARGE SCALE GENOMIC DNA]</scope>
    <source>
        <strain>ATCC BAA-895 / CDC 4225-83 / SGSC4696</strain>
    </source>
</reference>
<evidence type="ECO:0000255" key="1">
    <source>
        <dbReference type="HAMAP-Rule" id="MF_01583"/>
    </source>
</evidence>
<protein>
    <recommendedName>
        <fullName evidence="1">Threonine/serine transporter TdcC</fullName>
    </recommendedName>
    <alternativeName>
        <fullName evidence="1">H(+)/threonine-serine symporter</fullName>
    </alternativeName>
</protein>
<proteinExistence type="inferred from homology"/>
<dbReference type="EMBL" id="CP000822">
    <property type="protein sequence ID" value="ABV15571.1"/>
    <property type="molecule type" value="Genomic_DNA"/>
</dbReference>
<dbReference type="RefSeq" id="WP_012135253.1">
    <property type="nucleotide sequence ID" value="NC_009792.1"/>
</dbReference>
<dbReference type="SMR" id="A8AQ08"/>
<dbReference type="STRING" id="290338.CKO_04516"/>
<dbReference type="GeneID" id="45138072"/>
<dbReference type="KEGG" id="cko:CKO_04516"/>
<dbReference type="HOGENOM" id="CLU_052043_1_1_6"/>
<dbReference type="OrthoDB" id="1627372at2"/>
<dbReference type="Proteomes" id="UP000008148">
    <property type="component" value="Chromosome"/>
</dbReference>
<dbReference type="GO" id="GO:0005886">
    <property type="term" value="C:plasma membrane"/>
    <property type="evidence" value="ECO:0007669"/>
    <property type="project" value="UniProtKB-SubCell"/>
</dbReference>
<dbReference type="GO" id="GO:0015194">
    <property type="term" value="F:L-serine transmembrane transporter activity"/>
    <property type="evidence" value="ECO:0007669"/>
    <property type="project" value="InterPro"/>
</dbReference>
<dbReference type="GO" id="GO:0015293">
    <property type="term" value="F:symporter activity"/>
    <property type="evidence" value="ECO:0007669"/>
    <property type="project" value="UniProtKB-UniRule"/>
</dbReference>
<dbReference type="GO" id="GO:0015565">
    <property type="term" value="F:threonine efflux transmembrane transporter activity"/>
    <property type="evidence" value="ECO:0007669"/>
    <property type="project" value="InterPro"/>
</dbReference>
<dbReference type="Gene3D" id="1.20.1740.10">
    <property type="entry name" value="Amino acid/polyamine transporter I"/>
    <property type="match status" value="1"/>
</dbReference>
<dbReference type="HAMAP" id="MF_01583">
    <property type="entry name" value="Thr_Ser_transp_TdcC"/>
    <property type="match status" value="1"/>
</dbReference>
<dbReference type="InterPro" id="IPR018227">
    <property type="entry name" value="Amino_acid_transport_2"/>
</dbReference>
<dbReference type="InterPro" id="IPR004694">
    <property type="entry name" value="Hydroxy_aa_transpt"/>
</dbReference>
<dbReference type="InterPro" id="IPR023726">
    <property type="entry name" value="Thr/Ser_transpt_TdcC"/>
</dbReference>
<dbReference type="NCBIfam" id="NF010152">
    <property type="entry name" value="PRK13629.1"/>
    <property type="match status" value="1"/>
</dbReference>
<dbReference type="NCBIfam" id="TIGR00814">
    <property type="entry name" value="stp"/>
    <property type="match status" value="1"/>
</dbReference>
<dbReference type="PANTHER" id="PTHR35334">
    <property type="entry name" value="SERINE TRANSPORTER"/>
    <property type="match status" value="1"/>
</dbReference>
<dbReference type="PANTHER" id="PTHR35334:SF1">
    <property type="entry name" value="THREONINE_SERINE TRANSPORTER TDCC"/>
    <property type="match status" value="1"/>
</dbReference>
<dbReference type="Pfam" id="PF03222">
    <property type="entry name" value="Trp_Tyr_perm"/>
    <property type="match status" value="1"/>
</dbReference>
<organism>
    <name type="scientific">Citrobacter koseri (strain ATCC BAA-895 / CDC 4225-83 / SGSC4696)</name>
    <dbReference type="NCBI Taxonomy" id="290338"/>
    <lineage>
        <taxon>Bacteria</taxon>
        <taxon>Pseudomonadati</taxon>
        <taxon>Pseudomonadota</taxon>
        <taxon>Gammaproteobacteria</taxon>
        <taxon>Enterobacterales</taxon>
        <taxon>Enterobacteriaceae</taxon>
        <taxon>Citrobacter</taxon>
    </lineage>
</organism>
<gene>
    <name evidence="1" type="primary">tdcC</name>
    <name type="ordered locus">CKO_04516</name>
</gene>
<accession>A8AQ08</accession>